<keyword id="KW-0945">Host-virus interaction</keyword>
<keyword id="KW-1090">Inhibition of host innate immune response by virus</keyword>
<keyword id="KW-1114">Inhibition of host interferon signaling pathway by virus</keyword>
<keyword id="KW-1102">Inhibition of host PKR by virus</keyword>
<keyword id="KW-0922">Interferon antiviral system evasion</keyword>
<keyword id="KW-1185">Reference proteome</keyword>
<keyword id="KW-0694">RNA-binding</keyword>
<keyword id="KW-0899">Viral immunoevasion</keyword>
<name>PG041_VACCC</name>
<reference key="1">
    <citation type="journal article" date="1990" name="Virology">
        <title>The complete DNA sequence of vaccinia virus.</title>
        <authorList>
            <person name="Goebel S.J."/>
            <person name="Johnson G.P."/>
            <person name="Perkus M.E."/>
            <person name="Davis S.W."/>
            <person name="Winslow J.P."/>
            <person name="Paoletti E."/>
        </authorList>
    </citation>
    <scope>NUCLEOTIDE SEQUENCE [LARGE SCALE GENOMIC DNA]</scope>
</reference>
<reference key="2">
    <citation type="journal article" date="1990" name="Virology">
        <title>Appendix to 'The complete DNA sequence of vaccinia virus'.</title>
        <authorList>
            <person name="Goebel S.J."/>
            <person name="Johnson G.P."/>
            <person name="Perkus M.E."/>
            <person name="Davis S.W."/>
            <person name="Winslow J.P."/>
            <person name="Paoletti E."/>
        </authorList>
    </citation>
    <scope>NUCLEOTIDE SEQUENCE [LARGE SCALE GENOMIC DNA]</scope>
</reference>
<reference key="3">
    <citation type="journal article" date="1991" name="Virology">
        <title>Vaccinia virus-encoded eIF-2 alpha homolog abrogates the antiviral effect of interferon.</title>
        <authorList>
            <person name="Beattie E."/>
            <person name="Tartaglia J."/>
            <person name="Paoletti E."/>
        </authorList>
    </citation>
    <scope>FUNCTION</scope>
</reference>
<dbReference type="EMBL" id="M35027">
    <property type="protein sequence ID" value="AAA48009.1"/>
    <property type="molecule type" value="Genomic_DNA"/>
</dbReference>
<dbReference type="PIR" id="B42505">
    <property type="entry name" value="B42505"/>
</dbReference>
<dbReference type="SMR" id="P20639"/>
<dbReference type="DIP" id="DIP-57736N"/>
<dbReference type="IntAct" id="P20639">
    <property type="interactions" value="1"/>
</dbReference>
<dbReference type="MINT" id="P20639"/>
<dbReference type="Proteomes" id="UP000008269">
    <property type="component" value="Segment"/>
</dbReference>
<dbReference type="GO" id="GO:0030414">
    <property type="term" value="F:peptidase inhibitor activity"/>
    <property type="evidence" value="ECO:0007669"/>
    <property type="project" value="InterPro"/>
</dbReference>
<dbReference type="GO" id="GO:0030291">
    <property type="term" value="F:protein serine/threonine kinase inhibitor activity"/>
    <property type="evidence" value="ECO:0007669"/>
    <property type="project" value="UniProtKB-KW"/>
</dbReference>
<dbReference type="GO" id="GO:0003723">
    <property type="term" value="F:RNA binding"/>
    <property type="evidence" value="ECO:0007669"/>
    <property type="project" value="UniProtKB-KW"/>
</dbReference>
<dbReference type="GO" id="GO:0052170">
    <property type="term" value="P:symbiont-mediated suppression of host innate immune response"/>
    <property type="evidence" value="ECO:0007669"/>
    <property type="project" value="UniProtKB-KW"/>
</dbReference>
<dbReference type="GO" id="GO:0039580">
    <property type="term" value="P:symbiont-mediated suppression of host PKR/eIFalpha signaling"/>
    <property type="evidence" value="ECO:0007669"/>
    <property type="project" value="UniProtKB-KW"/>
</dbReference>
<dbReference type="GO" id="GO:0039502">
    <property type="term" value="P:symbiont-mediated suppression of host type I interferon-mediated signaling pathway"/>
    <property type="evidence" value="ECO:0007669"/>
    <property type="project" value="UniProtKB-KW"/>
</dbReference>
<dbReference type="Gene3D" id="2.40.50.140">
    <property type="entry name" value="Nucleic acid-binding proteins"/>
    <property type="match status" value="1"/>
</dbReference>
<dbReference type="InterPro" id="IPR016397">
    <property type="entry name" value="K3-like_poxvir"/>
</dbReference>
<dbReference type="InterPro" id="IPR012340">
    <property type="entry name" value="NA-bd_OB-fold"/>
</dbReference>
<dbReference type="InterPro" id="IPR003029">
    <property type="entry name" value="S1_domain"/>
</dbReference>
<dbReference type="Pfam" id="PF00575">
    <property type="entry name" value="S1"/>
    <property type="match status" value="1"/>
</dbReference>
<dbReference type="PIRSF" id="PIRSF003760">
    <property type="entry name" value="VAC_K3L_Serpin_prd"/>
    <property type="match status" value="1"/>
</dbReference>
<dbReference type="SMART" id="SM00316">
    <property type="entry name" value="S1"/>
    <property type="match status" value="1"/>
</dbReference>
<dbReference type="SUPFAM" id="SSF50249">
    <property type="entry name" value="Nucleic acid-binding proteins"/>
    <property type="match status" value="1"/>
</dbReference>
<accession>P20639</accession>
<organismHost>
    <name type="scientific">Homo sapiens</name>
    <name type="common">Human</name>
    <dbReference type="NCBI Taxonomy" id="9606"/>
</organismHost>
<protein>
    <recommendedName>
        <fullName>Protein K3</fullName>
    </recommendedName>
</protein>
<comment type="function">
    <text evidence="2">Viral mimic of eIF-2-alpha that acts as a pseudosubstrate for EIF2AK2/PKR kinase. Inhibits therefore eIF-2-alpha phosphorylation by host EIF2AK2/PKR kinase and prevents protein synthesis shutoff. Determinant of host species specificity.</text>
</comment>
<comment type="subunit">
    <text evidence="1">Interacts with host EIF2AK2/PKR kinase.</text>
</comment>
<comment type="interaction">
    <interactant intactId="EBI-8674942">
        <id>P20639</id>
    </interactant>
    <interactant intactId="EBI-640775">
        <id>P19525</id>
        <label>EIF2AK2</label>
    </interactant>
    <organismsDiffer>true</organismsDiffer>
    <experiments>3</experiments>
</comment>
<comment type="domain">
    <text evidence="2">The C-terminus is involved in the inhibition of host EIF2AK2/PKR kinase.</text>
</comment>
<comment type="similarity">
    <text evidence="3">Belongs to the orthopoxvirus OPG041 family.</text>
</comment>
<evidence type="ECO:0000250" key="1"/>
<evidence type="ECO:0000250" key="2">
    <source>
        <dbReference type="UniProtKB" id="P18378"/>
    </source>
</evidence>
<evidence type="ECO:0000305" key="3"/>
<sequence length="88" mass="10496">MLAFCYSLPNAGDVIKGRVYEKDYALYIYLFDYPHSEAILAESVKMHMDRYVEYRDKLVGKTVKVKVIRVDYTKGYIDVNYKRMCRHQ</sequence>
<gene>
    <name type="primary">OPG041</name>
    <name type="ORF">K3L</name>
</gene>
<proteinExistence type="evidence at protein level"/>
<feature type="chain" id="PRO_0000099598" description="Protein K3">
    <location>
        <begin position="1"/>
        <end position="88"/>
    </location>
</feature>
<feature type="domain" description="S1 motif">
    <location>
        <begin position="8"/>
        <end position="82"/>
    </location>
</feature>
<feature type="region of interest" description="Binding to host EIF2AK2/PKR" evidence="2">
    <location>
        <begin position="43"/>
        <end position="53"/>
    </location>
</feature>
<feature type="region of interest" description="Binding to host EIF2AK2/PKR" evidence="2">
    <location>
        <begin position="74"/>
        <end position="79"/>
    </location>
</feature>
<feature type="site" description="Involved in host species specificity" evidence="2">
    <location>
        <position position="45"/>
    </location>
</feature>
<organism>
    <name type="scientific">Vaccinia virus (strain Copenhagen)</name>
    <name type="common">VACV</name>
    <dbReference type="NCBI Taxonomy" id="10249"/>
    <lineage>
        <taxon>Viruses</taxon>
        <taxon>Varidnaviria</taxon>
        <taxon>Bamfordvirae</taxon>
        <taxon>Nucleocytoviricota</taxon>
        <taxon>Pokkesviricetes</taxon>
        <taxon>Chitovirales</taxon>
        <taxon>Poxviridae</taxon>
        <taxon>Chordopoxvirinae</taxon>
        <taxon>Orthopoxvirus</taxon>
        <taxon>Vaccinia virus</taxon>
    </lineage>
</organism>